<organism>
    <name type="scientific">Schizosaccharomyces pombe (strain 972 / ATCC 24843)</name>
    <name type="common">Fission yeast</name>
    <dbReference type="NCBI Taxonomy" id="284812"/>
    <lineage>
        <taxon>Eukaryota</taxon>
        <taxon>Fungi</taxon>
        <taxon>Dikarya</taxon>
        <taxon>Ascomycota</taxon>
        <taxon>Taphrinomycotina</taxon>
        <taxon>Schizosaccharomycetes</taxon>
        <taxon>Schizosaccharomycetales</taxon>
        <taxon>Schizosaccharomycetaceae</taxon>
        <taxon>Schizosaccharomyces</taxon>
    </lineage>
</organism>
<keyword id="KW-0597">Phosphoprotein</keyword>
<keyword id="KW-1185">Reference proteome</keyword>
<keyword id="KW-0728">SH3 domain</keyword>
<comment type="similarity">
    <text evidence="4">Belongs to the SH3YL1 family.</text>
</comment>
<evidence type="ECO:0000255" key="1">
    <source>
        <dbReference type="PROSITE-ProRule" id="PRU00192"/>
    </source>
</evidence>
<evidence type="ECO:0000256" key="2">
    <source>
        <dbReference type="SAM" id="MobiDB-lite"/>
    </source>
</evidence>
<evidence type="ECO:0000269" key="3">
    <source>
    </source>
</evidence>
<evidence type="ECO:0000305" key="4"/>
<sequence length="430" mass="46374">MGLHNPLPSSLKSECKKAGKILTSFVDPRQTLGAQEVIPPSVLTNAKGLVIMTVLKAGFLFSGRIGSGLIVARLDDGTWSAPSAVMTGGMGVGAQIGSELTDFVIILNSKAAVQTFARLGSITLGGNLSIAAGPLGRNAEAGGGASVGGMAPMFSYSKTKGLFAGVSLEGSVLVERRDANRSLYRGDITAKRLLSGQVAQPAAADPLYRVLNSKIFNLNRGDEGDIYNDVPIYADDEPEDIWGPSSKSTKRRDSADRSSSYSRRGDSYRSNRSRAHDDDDEDDYSFSRSKSLSRKTAGGSLRSSKMDNRRSKYADTPSPRRSRSYSDEDEESVYSSDVSTESSSQFSSRSSEYSKPSRPTAPKPKFKQDSLGPNQARAMYSFAGEQPGDLSFQKGDIIDIVERSGSHDDWWTGRIGYREGIFPANYVKLS</sequence>
<name>YIE2_SCHPO</name>
<protein>
    <recommendedName>
        <fullName>SH3 domain-containing protein PJ696.02</fullName>
    </recommendedName>
</protein>
<accession>Q9URW6</accession>
<proteinExistence type="evidence at protein level"/>
<reference key="1">
    <citation type="journal article" date="2002" name="Nature">
        <title>The genome sequence of Schizosaccharomyces pombe.</title>
        <authorList>
            <person name="Wood V."/>
            <person name="Gwilliam R."/>
            <person name="Rajandream M.A."/>
            <person name="Lyne M.H."/>
            <person name="Lyne R."/>
            <person name="Stewart A."/>
            <person name="Sgouros J.G."/>
            <person name="Peat N."/>
            <person name="Hayles J."/>
            <person name="Baker S.G."/>
            <person name="Basham D."/>
            <person name="Bowman S."/>
            <person name="Brooks K."/>
            <person name="Brown D."/>
            <person name="Brown S."/>
            <person name="Chillingworth T."/>
            <person name="Churcher C.M."/>
            <person name="Collins M."/>
            <person name="Connor R."/>
            <person name="Cronin A."/>
            <person name="Davis P."/>
            <person name="Feltwell T."/>
            <person name="Fraser A."/>
            <person name="Gentles S."/>
            <person name="Goble A."/>
            <person name="Hamlin N."/>
            <person name="Harris D.E."/>
            <person name="Hidalgo J."/>
            <person name="Hodgson G."/>
            <person name="Holroyd S."/>
            <person name="Hornsby T."/>
            <person name="Howarth S."/>
            <person name="Huckle E.J."/>
            <person name="Hunt S."/>
            <person name="Jagels K."/>
            <person name="James K.D."/>
            <person name="Jones L."/>
            <person name="Jones M."/>
            <person name="Leather S."/>
            <person name="McDonald S."/>
            <person name="McLean J."/>
            <person name="Mooney P."/>
            <person name="Moule S."/>
            <person name="Mungall K.L."/>
            <person name="Murphy L.D."/>
            <person name="Niblett D."/>
            <person name="Odell C."/>
            <person name="Oliver K."/>
            <person name="O'Neil S."/>
            <person name="Pearson D."/>
            <person name="Quail M.A."/>
            <person name="Rabbinowitsch E."/>
            <person name="Rutherford K.M."/>
            <person name="Rutter S."/>
            <person name="Saunders D."/>
            <person name="Seeger K."/>
            <person name="Sharp S."/>
            <person name="Skelton J."/>
            <person name="Simmonds M.N."/>
            <person name="Squares R."/>
            <person name="Squares S."/>
            <person name="Stevens K."/>
            <person name="Taylor K."/>
            <person name="Taylor R.G."/>
            <person name="Tivey A."/>
            <person name="Walsh S.V."/>
            <person name="Warren T."/>
            <person name="Whitehead S."/>
            <person name="Woodward J.R."/>
            <person name="Volckaert G."/>
            <person name="Aert R."/>
            <person name="Robben J."/>
            <person name="Grymonprez B."/>
            <person name="Weltjens I."/>
            <person name="Vanstreels E."/>
            <person name="Rieger M."/>
            <person name="Schaefer M."/>
            <person name="Mueller-Auer S."/>
            <person name="Gabel C."/>
            <person name="Fuchs M."/>
            <person name="Duesterhoeft A."/>
            <person name="Fritzc C."/>
            <person name="Holzer E."/>
            <person name="Moestl D."/>
            <person name="Hilbert H."/>
            <person name="Borzym K."/>
            <person name="Langer I."/>
            <person name="Beck A."/>
            <person name="Lehrach H."/>
            <person name="Reinhardt R."/>
            <person name="Pohl T.M."/>
            <person name="Eger P."/>
            <person name="Zimmermann W."/>
            <person name="Wedler H."/>
            <person name="Wambutt R."/>
            <person name="Purnelle B."/>
            <person name="Goffeau A."/>
            <person name="Cadieu E."/>
            <person name="Dreano S."/>
            <person name="Gloux S."/>
            <person name="Lelaure V."/>
            <person name="Mottier S."/>
            <person name="Galibert F."/>
            <person name="Aves S.J."/>
            <person name="Xiang Z."/>
            <person name="Hunt C."/>
            <person name="Moore K."/>
            <person name="Hurst S.M."/>
            <person name="Lucas M."/>
            <person name="Rochet M."/>
            <person name="Gaillardin C."/>
            <person name="Tallada V.A."/>
            <person name="Garzon A."/>
            <person name="Thode G."/>
            <person name="Daga R.R."/>
            <person name="Cruzado L."/>
            <person name="Jimenez J."/>
            <person name="Sanchez M."/>
            <person name="del Rey F."/>
            <person name="Benito J."/>
            <person name="Dominguez A."/>
            <person name="Revuelta J.L."/>
            <person name="Moreno S."/>
            <person name="Armstrong J."/>
            <person name="Forsburg S.L."/>
            <person name="Cerutti L."/>
            <person name="Lowe T."/>
            <person name="McCombie W.R."/>
            <person name="Paulsen I."/>
            <person name="Potashkin J."/>
            <person name="Shpakovski G.V."/>
            <person name="Ussery D."/>
            <person name="Barrell B.G."/>
            <person name="Nurse P."/>
        </authorList>
    </citation>
    <scope>NUCLEOTIDE SEQUENCE [LARGE SCALE GENOMIC DNA]</scope>
    <source>
        <strain>972 / ATCC 24843</strain>
    </source>
</reference>
<reference key="2">
    <citation type="journal article" date="2008" name="J. Proteome Res.">
        <title>Phosphoproteome analysis of fission yeast.</title>
        <authorList>
            <person name="Wilson-Grady J.T."/>
            <person name="Villen J."/>
            <person name="Gygi S.P."/>
        </authorList>
    </citation>
    <scope>PHOSPHORYLATION [LARGE SCALE ANALYSIS] AT SER-285; THR-316; SER-318; SER-324; TYR-325; SER-326; SER-354 AND SER-406</scope>
    <scope>IDENTIFICATION BY MASS SPECTROMETRY</scope>
</reference>
<feature type="chain" id="PRO_0000303942" description="SH3 domain-containing protein PJ696.02">
    <location>
        <begin position="1"/>
        <end position="430"/>
    </location>
</feature>
<feature type="domain" description="SH3" evidence="1">
    <location>
        <begin position="371"/>
        <end position="430"/>
    </location>
</feature>
<feature type="region of interest" description="Disordered" evidence="2">
    <location>
        <begin position="237"/>
        <end position="372"/>
    </location>
</feature>
<feature type="compositionally biased region" description="Basic and acidic residues" evidence="2">
    <location>
        <begin position="263"/>
        <end position="277"/>
    </location>
</feature>
<feature type="compositionally biased region" description="Basic and acidic residues" evidence="2">
    <location>
        <begin position="304"/>
        <end position="313"/>
    </location>
</feature>
<feature type="compositionally biased region" description="Low complexity" evidence="2">
    <location>
        <begin position="333"/>
        <end position="358"/>
    </location>
</feature>
<feature type="modified residue" description="Phosphoserine" evidence="3">
    <location>
        <position position="285"/>
    </location>
</feature>
<feature type="modified residue" description="Phosphothreonine" evidence="3">
    <location>
        <position position="316"/>
    </location>
</feature>
<feature type="modified residue" description="Phosphoserine" evidence="3">
    <location>
        <position position="318"/>
    </location>
</feature>
<feature type="modified residue" description="Phosphoserine" evidence="3">
    <location>
        <position position="324"/>
    </location>
</feature>
<feature type="modified residue" description="Phosphotyrosine" evidence="3">
    <location>
        <position position="325"/>
    </location>
</feature>
<feature type="modified residue" description="Phosphoserine" evidence="3">
    <location>
        <position position="326"/>
    </location>
</feature>
<feature type="modified residue" description="Phosphoserine" evidence="3">
    <location>
        <position position="354"/>
    </location>
</feature>
<feature type="modified residue" description="Phosphoserine" evidence="3">
    <location>
        <position position="406"/>
    </location>
</feature>
<gene>
    <name type="ORF">SPAPJ696.02</name>
</gene>
<dbReference type="EMBL" id="CU329670">
    <property type="protein sequence ID" value="CAB62422.1"/>
    <property type="molecule type" value="Genomic_DNA"/>
</dbReference>
<dbReference type="PIR" id="T50296">
    <property type="entry name" value="T50296"/>
</dbReference>
<dbReference type="SMR" id="Q9URW6"/>
<dbReference type="BioGRID" id="279729">
    <property type="interactions" value="4"/>
</dbReference>
<dbReference type="FunCoup" id="Q9URW6">
    <property type="interactions" value="39"/>
</dbReference>
<dbReference type="STRING" id="284812.Q9URW6"/>
<dbReference type="iPTMnet" id="Q9URW6"/>
<dbReference type="PaxDb" id="4896-SPAPJ696.02.1"/>
<dbReference type="EnsemblFungi" id="SPAPJ696.02.1">
    <property type="protein sequence ID" value="SPAPJ696.02.1:pep"/>
    <property type="gene ID" value="SPAPJ696.02"/>
</dbReference>
<dbReference type="KEGG" id="spo:2543305"/>
<dbReference type="PomBase" id="SPAPJ696.02"/>
<dbReference type="VEuPathDB" id="FungiDB:SPAPJ696.02"/>
<dbReference type="eggNOG" id="KOG1843">
    <property type="taxonomic scope" value="Eukaryota"/>
</dbReference>
<dbReference type="HOGENOM" id="CLU_015320_2_0_1"/>
<dbReference type="InParanoid" id="Q9URW6"/>
<dbReference type="OMA" id="VIFTRND"/>
<dbReference type="PhylomeDB" id="Q9URW6"/>
<dbReference type="PRO" id="PR:Q9URW6"/>
<dbReference type="Proteomes" id="UP000002485">
    <property type="component" value="Chromosome I"/>
</dbReference>
<dbReference type="GO" id="GO:0030479">
    <property type="term" value="C:actin cortical patch"/>
    <property type="evidence" value="ECO:0000318"/>
    <property type="project" value="GO_Central"/>
</dbReference>
<dbReference type="GO" id="GO:0051015">
    <property type="term" value="F:actin filament binding"/>
    <property type="evidence" value="ECO:0000318"/>
    <property type="project" value="GO_Central"/>
</dbReference>
<dbReference type="GO" id="GO:0035091">
    <property type="term" value="F:phosphatidylinositol binding"/>
    <property type="evidence" value="ECO:0000318"/>
    <property type="project" value="GO_Central"/>
</dbReference>
<dbReference type="GO" id="GO:0051666">
    <property type="term" value="P:actin cortical patch localization"/>
    <property type="evidence" value="ECO:0000318"/>
    <property type="project" value="GO_Central"/>
</dbReference>
<dbReference type="GO" id="GO:0051017">
    <property type="term" value="P:actin filament bundle assembly"/>
    <property type="evidence" value="ECO:0000318"/>
    <property type="project" value="GO_Central"/>
</dbReference>
<dbReference type="GO" id="GO:0006897">
    <property type="term" value="P:endocytosis"/>
    <property type="evidence" value="ECO:0000266"/>
    <property type="project" value="PomBase"/>
</dbReference>
<dbReference type="CDD" id="cd11842">
    <property type="entry name" value="SH3_Ysc84p_like"/>
    <property type="match status" value="1"/>
</dbReference>
<dbReference type="CDD" id="cd11525">
    <property type="entry name" value="SYLF_SH3YL1_like"/>
    <property type="match status" value="1"/>
</dbReference>
<dbReference type="FunFam" id="2.30.30.40:FF:000100">
    <property type="entry name" value="SH3 domain-containing YSC84-like protein 1"/>
    <property type="match status" value="1"/>
</dbReference>
<dbReference type="Gene3D" id="2.30.30.40">
    <property type="entry name" value="SH3 Domains"/>
    <property type="match status" value="1"/>
</dbReference>
<dbReference type="InterPro" id="IPR036028">
    <property type="entry name" value="SH3-like_dom_sf"/>
</dbReference>
<dbReference type="InterPro" id="IPR001452">
    <property type="entry name" value="SH3_domain"/>
</dbReference>
<dbReference type="InterPro" id="IPR051702">
    <property type="entry name" value="SH3_domain_YSC84-like"/>
</dbReference>
<dbReference type="InterPro" id="IPR033643">
    <property type="entry name" value="SYLF_SH3YL1-like"/>
</dbReference>
<dbReference type="InterPro" id="IPR007461">
    <property type="entry name" value="Ysc84_actin-binding"/>
</dbReference>
<dbReference type="PANTHER" id="PTHR15629:SF2">
    <property type="entry name" value="SH3 DOMAIN-CONTAINING YSC84-LIKE PROTEIN 1"/>
    <property type="match status" value="1"/>
</dbReference>
<dbReference type="PANTHER" id="PTHR15629">
    <property type="entry name" value="SH3YL1 PROTEIN"/>
    <property type="match status" value="1"/>
</dbReference>
<dbReference type="Pfam" id="PF00018">
    <property type="entry name" value="SH3_1"/>
    <property type="match status" value="1"/>
</dbReference>
<dbReference type="Pfam" id="PF04366">
    <property type="entry name" value="Ysc84"/>
    <property type="match status" value="1"/>
</dbReference>
<dbReference type="PRINTS" id="PR00452">
    <property type="entry name" value="SH3DOMAIN"/>
</dbReference>
<dbReference type="SMART" id="SM00326">
    <property type="entry name" value="SH3"/>
    <property type="match status" value="1"/>
</dbReference>
<dbReference type="SUPFAM" id="SSF50044">
    <property type="entry name" value="SH3-domain"/>
    <property type="match status" value="1"/>
</dbReference>
<dbReference type="PROSITE" id="PS50002">
    <property type="entry name" value="SH3"/>
    <property type="match status" value="1"/>
</dbReference>